<comment type="function">
    <text evidence="1">Catalyzes the formation of acetyl phosphate from acetate and ATP. Can also catalyze the reverse reaction.</text>
</comment>
<comment type="catalytic activity">
    <reaction evidence="1">
        <text>acetate + ATP = acetyl phosphate + ADP</text>
        <dbReference type="Rhea" id="RHEA:11352"/>
        <dbReference type="ChEBI" id="CHEBI:22191"/>
        <dbReference type="ChEBI" id="CHEBI:30089"/>
        <dbReference type="ChEBI" id="CHEBI:30616"/>
        <dbReference type="ChEBI" id="CHEBI:456216"/>
        <dbReference type="EC" id="2.7.2.1"/>
    </reaction>
</comment>
<comment type="cofactor">
    <cofactor evidence="1">
        <name>Mg(2+)</name>
        <dbReference type="ChEBI" id="CHEBI:18420"/>
    </cofactor>
    <cofactor evidence="1">
        <name>Mn(2+)</name>
        <dbReference type="ChEBI" id="CHEBI:29035"/>
    </cofactor>
    <text evidence="1">Mg(2+). Can also accept Mn(2+).</text>
</comment>
<comment type="pathway">
    <text evidence="1">Metabolic intermediate biosynthesis; acetyl-CoA biosynthesis; acetyl-CoA from acetate: step 1/2.</text>
</comment>
<comment type="subunit">
    <text evidence="1">Homodimer.</text>
</comment>
<comment type="subcellular location">
    <subcellularLocation>
        <location evidence="1">Cytoplasm</location>
    </subcellularLocation>
</comment>
<comment type="similarity">
    <text evidence="1">Belongs to the acetokinase family.</text>
</comment>
<gene>
    <name evidence="1" type="primary">ackA2</name>
    <name type="ordered locus">NMA2050</name>
</gene>
<evidence type="ECO:0000255" key="1">
    <source>
        <dbReference type="HAMAP-Rule" id="MF_00020"/>
    </source>
</evidence>
<dbReference type="EC" id="2.7.2.1" evidence="1"/>
<dbReference type="EMBL" id="AL157959">
    <property type="protein sequence ID" value="CAM09153.1"/>
    <property type="molecule type" value="Genomic_DNA"/>
</dbReference>
<dbReference type="PIR" id="F81775">
    <property type="entry name" value="F81775"/>
</dbReference>
<dbReference type="RefSeq" id="WP_002245900.1">
    <property type="nucleotide sequence ID" value="NC_003116.1"/>
</dbReference>
<dbReference type="SMR" id="Q9JT07"/>
<dbReference type="EnsemblBacteria" id="CAM09153">
    <property type="protein sequence ID" value="CAM09153"/>
    <property type="gene ID" value="NMA2050"/>
</dbReference>
<dbReference type="KEGG" id="nma:NMA2050"/>
<dbReference type="HOGENOM" id="CLU_020352_0_1_4"/>
<dbReference type="UniPathway" id="UPA00340">
    <property type="reaction ID" value="UER00458"/>
</dbReference>
<dbReference type="Proteomes" id="UP000000626">
    <property type="component" value="Chromosome"/>
</dbReference>
<dbReference type="GO" id="GO:0005829">
    <property type="term" value="C:cytosol"/>
    <property type="evidence" value="ECO:0007669"/>
    <property type="project" value="TreeGrafter"/>
</dbReference>
<dbReference type="GO" id="GO:0008776">
    <property type="term" value="F:acetate kinase activity"/>
    <property type="evidence" value="ECO:0007669"/>
    <property type="project" value="UniProtKB-UniRule"/>
</dbReference>
<dbReference type="GO" id="GO:0005524">
    <property type="term" value="F:ATP binding"/>
    <property type="evidence" value="ECO:0007669"/>
    <property type="project" value="UniProtKB-KW"/>
</dbReference>
<dbReference type="GO" id="GO:0000287">
    <property type="term" value="F:magnesium ion binding"/>
    <property type="evidence" value="ECO:0007669"/>
    <property type="project" value="UniProtKB-UniRule"/>
</dbReference>
<dbReference type="GO" id="GO:0006083">
    <property type="term" value="P:acetate metabolic process"/>
    <property type="evidence" value="ECO:0007669"/>
    <property type="project" value="TreeGrafter"/>
</dbReference>
<dbReference type="GO" id="GO:0006085">
    <property type="term" value="P:acetyl-CoA biosynthetic process"/>
    <property type="evidence" value="ECO:0007669"/>
    <property type="project" value="UniProtKB-UniRule"/>
</dbReference>
<dbReference type="CDD" id="cd24010">
    <property type="entry name" value="ASKHA_NBD_AcK_PK"/>
    <property type="match status" value="1"/>
</dbReference>
<dbReference type="Gene3D" id="3.30.420.40">
    <property type="match status" value="2"/>
</dbReference>
<dbReference type="HAMAP" id="MF_00020">
    <property type="entry name" value="Acetate_kinase"/>
    <property type="match status" value="1"/>
</dbReference>
<dbReference type="InterPro" id="IPR004372">
    <property type="entry name" value="Ac/propionate_kinase"/>
</dbReference>
<dbReference type="InterPro" id="IPR000890">
    <property type="entry name" value="Aliphatic_acid_kin_short-chain"/>
</dbReference>
<dbReference type="InterPro" id="IPR023865">
    <property type="entry name" value="Aliphatic_acid_kinase_CS"/>
</dbReference>
<dbReference type="InterPro" id="IPR043129">
    <property type="entry name" value="ATPase_NBD"/>
</dbReference>
<dbReference type="NCBIfam" id="TIGR00016">
    <property type="entry name" value="ackA"/>
    <property type="match status" value="1"/>
</dbReference>
<dbReference type="PANTHER" id="PTHR21060">
    <property type="entry name" value="ACETATE KINASE"/>
    <property type="match status" value="1"/>
</dbReference>
<dbReference type="PANTHER" id="PTHR21060:SF21">
    <property type="entry name" value="ACETATE KINASE"/>
    <property type="match status" value="1"/>
</dbReference>
<dbReference type="Pfam" id="PF00871">
    <property type="entry name" value="Acetate_kinase"/>
    <property type="match status" value="1"/>
</dbReference>
<dbReference type="PIRSF" id="PIRSF000722">
    <property type="entry name" value="Acetate_prop_kin"/>
    <property type="match status" value="1"/>
</dbReference>
<dbReference type="PRINTS" id="PR00471">
    <property type="entry name" value="ACETATEKNASE"/>
</dbReference>
<dbReference type="SUPFAM" id="SSF53067">
    <property type="entry name" value="Actin-like ATPase domain"/>
    <property type="match status" value="2"/>
</dbReference>
<dbReference type="PROSITE" id="PS01075">
    <property type="entry name" value="ACETATE_KINASE_1"/>
    <property type="match status" value="1"/>
</dbReference>
<dbReference type="PROSITE" id="PS01076">
    <property type="entry name" value="ACETATE_KINASE_2"/>
    <property type="match status" value="1"/>
</dbReference>
<organism>
    <name type="scientific">Neisseria meningitidis serogroup A / serotype 4A (strain DSM 15465 / Z2491)</name>
    <dbReference type="NCBI Taxonomy" id="122587"/>
    <lineage>
        <taxon>Bacteria</taxon>
        <taxon>Pseudomonadati</taxon>
        <taxon>Pseudomonadota</taxon>
        <taxon>Betaproteobacteria</taxon>
        <taxon>Neisseriales</taxon>
        <taxon>Neisseriaceae</taxon>
        <taxon>Neisseria</taxon>
    </lineage>
</organism>
<feature type="chain" id="PRO_0000107591" description="Acetate kinase 2">
    <location>
        <begin position="1"/>
        <end position="399"/>
    </location>
</feature>
<feature type="active site" description="Proton donor/acceptor" evidence="1">
    <location>
        <position position="146"/>
    </location>
</feature>
<feature type="binding site" evidence="1">
    <location>
        <position position="10"/>
    </location>
    <ligand>
        <name>Mg(2+)</name>
        <dbReference type="ChEBI" id="CHEBI:18420"/>
    </ligand>
</feature>
<feature type="binding site" evidence="1">
    <location>
        <position position="17"/>
    </location>
    <ligand>
        <name>ATP</name>
        <dbReference type="ChEBI" id="CHEBI:30616"/>
    </ligand>
</feature>
<feature type="binding site" evidence="1">
    <location>
        <position position="89"/>
    </location>
    <ligand>
        <name>substrate</name>
    </ligand>
</feature>
<feature type="binding site" evidence="1">
    <location>
        <begin position="206"/>
        <end position="210"/>
    </location>
    <ligand>
        <name>ATP</name>
        <dbReference type="ChEBI" id="CHEBI:30616"/>
    </ligand>
</feature>
<feature type="binding site" evidence="1">
    <location>
        <begin position="281"/>
        <end position="283"/>
    </location>
    <ligand>
        <name>ATP</name>
        <dbReference type="ChEBI" id="CHEBI:30616"/>
    </ligand>
</feature>
<feature type="binding site" evidence="1">
    <location>
        <begin position="329"/>
        <end position="333"/>
    </location>
    <ligand>
        <name>ATP</name>
        <dbReference type="ChEBI" id="CHEBI:30616"/>
    </ligand>
</feature>
<feature type="binding site" evidence="1">
    <location>
        <position position="384"/>
    </location>
    <ligand>
        <name>Mg(2+)</name>
        <dbReference type="ChEBI" id="CHEBI:18420"/>
    </ligand>
</feature>
<feature type="site" description="Transition state stabilizer" evidence="1">
    <location>
        <position position="178"/>
    </location>
</feature>
<feature type="site" description="Transition state stabilizer" evidence="1">
    <location>
        <position position="239"/>
    </location>
</feature>
<reference key="1">
    <citation type="journal article" date="2000" name="Nature">
        <title>Complete DNA sequence of a serogroup A strain of Neisseria meningitidis Z2491.</title>
        <authorList>
            <person name="Parkhill J."/>
            <person name="Achtman M."/>
            <person name="James K.D."/>
            <person name="Bentley S.D."/>
            <person name="Churcher C.M."/>
            <person name="Klee S.R."/>
            <person name="Morelli G."/>
            <person name="Basham D."/>
            <person name="Brown D."/>
            <person name="Chillingworth T."/>
            <person name="Davies R.M."/>
            <person name="Davis P."/>
            <person name="Devlin K."/>
            <person name="Feltwell T."/>
            <person name="Hamlin N."/>
            <person name="Holroyd S."/>
            <person name="Jagels K."/>
            <person name="Leather S."/>
            <person name="Moule S."/>
            <person name="Mungall K.L."/>
            <person name="Quail M.A."/>
            <person name="Rajandream M.A."/>
            <person name="Rutherford K.M."/>
            <person name="Simmonds M."/>
            <person name="Skelton J."/>
            <person name="Whitehead S."/>
            <person name="Spratt B.G."/>
            <person name="Barrell B.G."/>
        </authorList>
    </citation>
    <scope>NUCLEOTIDE SEQUENCE [LARGE SCALE GENOMIC DNA]</scope>
    <source>
        <strain>DSM 15465 / Z2491</strain>
    </source>
</reference>
<keyword id="KW-0067">ATP-binding</keyword>
<keyword id="KW-0963">Cytoplasm</keyword>
<keyword id="KW-0418">Kinase</keyword>
<keyword id="KW-0460">Magnesium</keyword>
<keyword id="KW-0479">Metal-binding</keyword>
<keyword id="KW-0547">Nucleotide-binding</keyword>
<keyword id="KW-0808">Transferase</keyword>
<name>ACKA2_NEIMA</name>
<sequence length="399" mass="42783">MSDQLILVLNCGSSSLKGAVIDRKSGSVVLSCLGERLTTPEAVITFSKDGNKRQVPLSGRNCHAGAVGMLLNELEKHELHDRIQAVGHRIAHGGEKYSESVLIDQAVMDELNACIPLAPLHNPANISGILAAQEHFPGLPNVGVMDTSFHQTMPERAYTYAVPRELRKKYAFRRYGFHGTSMRYVAPEAACILGKPLEDIRMIIAHLGNGASITAIKNGKSVDTSMGFTPIEGLVMGTRCGDIDPGVYSYLTSHAGLDVAQVDEMLNKKSGLLGISELSNDCRTLEIAADEGHEGARLALEVMTYRLAKYIASMAVGCGGVDALVFTGGIGENSRNIRAKTVSYLDFLGLHIDTKANMEKRYGNSGIISPTDSSPAVLVVPTNEELMIACDTAELVGIL</sequence>
<proteinExistence type="inferred from homology"/>
<accession>Q9JT07</accession>
<accession>A1ITN6</accession>
<protein>
    <recommendedName>
        <fullName evidence="1">Acetate kinase 2</fullName>
        <ecNumber evidence="1">2.7.2.1</ecNumber>
    </recommendedName>
    <alternativeName>
        <fullName evidence="1">Acetokinase 2</fullName>
    </alternativeName>
</protein>